<protein>
    <recommendedName>
        <fullName evidence="1">GMP synthase [glutamine-hydrolyzing]</fullName>
        <ecNumber evidence="1">6.3.5.2</ecNumber>
    </recommendedName>
    <alternativeName>
        <fullName evidence="1">GMP synthetase</fullName>
    </alternativeName>
    <alternativeName>
        <fullName evidence="1">Glutamine amidotransferase</fullName>
    </alternativeName>
</protein>
<comment type="function">
    <text evidence="1">Catalyzes the synthesis of GMP from XMP.</text>
</comment>
<comment type="catalytic activity">
    <reaction evidence="1">
        <text>XMP + L-glutamine + ATP + H2O = GMP + L-glutamate + AMP + diphosphate + 2 H(+)</text>
        <dbReference type="Rhea" id="RHEA:11680"/>
        <dbReference type="ChEBI" id="CHEBI:15377"/>
        <dbReference type="ChEBI" id="CHEBI:15378"/>
        <dbReference type="ChEBI" id="CHEBI:29985"/>
        <dbReference type="ChEBI" id="CHEBI:30616"/>
        <dbReference type="ChEBI" id="CHEBI:33019"/>
        <dbReference type="ChEBI" id="CHEBI:57464"/>
        <dbReference type="ChEBI" id="CHEBI:58115"/>
        <dbReference type="ChEBI" id="CHEBI:58359"/>
        <dbReference type="ChEBI" id="CHEBI:456215"/>
        <dbReference type="EC" id="6.3.5.2"/>
    </reaction>
</comment>
<comment type="pathway">
    <text evidence="1">Purine metabolism; GMP biosynthesis; GMP from XMP (L-Gln route): step 1/1.</text>
</comment>
<comment type="subunit">
    <text evidence="1">Homodimer.</text>
</comment>
<reference key="1">
    <citation type="journal article" date="2004" name="Nat. Genet.">
        <title>Evidence in the Legionella pneumophila genome for exploitation of host cell functions and high genome plasticity.</title>
        <authorList>
            <person name="Cazalet C."/>
            <person name="Rusniok C."/>
            <person name="Brueggemann H."/>
            <person name="Zidane N."/>
            <person name="Magnier A."/>
            <person name="Ma L."/>
            <person name="Tichit M."/>
            <person name="Jarraud S."/>
            <person name="Bouchier C."/>
            <person name="Vandenesch F."/>
            <person name="Kunst F."/>
            <person name="Etienne J."/>
            <person name="Glaser P."/>
            <person name="Buchrieser C."/>
        </authorList>
    </citation>
    <scope>NUCLEOTIDE SEQUENCE [LARGE SCALE GENOMIC DNA]</scope>
    <source>
        <strain>Paris</strain>
    </source>
</reference>
<name>GUAA_LEGPA</name>
<accession>Q5X4I9</accession>
<gene>
    <name evidence="1" type="primary">guaA</name>
    <name type="ordered locus">lpp1687</name>
</gene>
<evidence type="ECO:0000255" key="1">
    <source>
        <dbReference type="HAMAP-Rule" id="MF_00344"/>
    </source>
</evidence>
<feature type="chain" id="PRO_0000229438" description="GMP synthase [glutamine-hydrolyzing]">
    <location>
        <begin position="1"/>
        <end position="525"/>
    </location>
</feature>
<feature type="domain" description="Glutamine amidotransferase type-1" evidence="1">
    <location>
        <begin position="8"/>
        <end position="206"/>
    </location>
</feature>
<feature type="domain" description="GMPS ATP-PPase" evidence="1">
    <location>
        <begin position="207"/>
        <end position="400"/>
    </location>
</feature>
<feature type="active site" description="Nucleophile" evidence="1">
    <location>
        <position position="85"/>
    </location>
</feature>
<feature type="active site" evidence="1">
    <location>
        <position position="180"/>
    </location>
</feature>
<feature type="active site" evidence="1">
    <location>
        <position position="182"/>
    </location>
</feature>
<feature type="binding site" evidence="1">
    <location>
        <begin position="234"/>
        <end position="240"/>
    </location>
    <ligand>
        <name>ATP</name>
        <dbReference type="ChEBI" id="CHEBI:30616"/>
    </ligand>
</feature>
<organism>
    <name type="scientific">Legionella pneumophila (strain Paris)</name>
    <dbReference type="NCBI Taxonomy" id="297246"/>
    <lineage>
        <taxon>Bacteria</taxon>
        <taxon>Pseudomonadati</taxon>
        <taxon>Pseudomonadota</taxon>
        <taxon>Gammaproteobacteria</taxon>
        <taxon>Legionellales</taxon>
        <taxon>Legionellaceae</taxon>
        <taxon>Legionella</taxon>
    </lineage>
</organism>
<dbReference type="EC" id="6.3.5.2" evidence="1"/>
<dbReference type="EMBL" id="CR628336">
    <property type="protein sequence ID" value="CAH12839.1"/>
    <property type="molecule type" value="Genomic_DNA"/>
</dbReference>
<dbReference type="RefSeq" id="WP_011213992.1">
    <property type="nucleotide sequence ID" value="NC_006368.1"/>
</dbReference>
<dbReference type="SMR" id="Q5X4I9"/>
<dbReference type="MEROPS" id="C26.957"/>
<dbReference type="KEGG" id="lpp:lpp1687"/>
<dbReference type="LegioList" id="lpp1687"/>
<dbReference type="HOGENOM" id="CLU_014340_0_5_6"/>
<dbReference type="UniPathway" id="UPA00189">
    <property type="reaction ID" value="UER00296"/>
</dbReference>
<dbReference type="GO" id="GO:0005829">
    <property type="term" value="C:cytosol"/>
    <property type="evidence" value="ECO:0007669"/>
    <property type="project" value="TreeGrafter"/>
</dbReference>
<dbReference type="GO" id="GO:0005524">
    <property type="term" value="F:ATP binding"/>
    <property type="evidence" value="ECO:0007669"/>
    <property type="project" value="UniProtKB-UniRule"/>
</dbReference>
<dbReference type="GO" id="GO:0003921">
    <property type="term" value="F:GMP synthase activity"/>
    <property type="evidence" value="ECO:0007669"/>
    <property type="project" value="InterPro"/>
</dbReference>
<dbReference type="CDD" id="cd01742">
    <property type="entry name" value="GATase1_GMP_Synthase"/>
    <property type="match status" value="1"/>
</dbReference>
<dbReference type="CDD" id="cd01997">
    <property type="entry name" value="GMP_synthase_C"/>
    <property type="match status" value="1"/>
</dbReference>
<dbReference type="FunFam" id="3.30.300.10:FF:000002">
    <property type="entry name" value="GMP synthase [glutamine-hydrolyzing]"/>
    <property type="match status" value="1"/>
</dbReference>
<dbReference type="FunFam" id="3.40.50.620:FF:000001">
    <property type="entry name" value="GMP synthase [glutamine-hydrolyzing]"/>
    <property type="match status" value="1"/>
</dbReference>
<dbReference type="FunFam" id="3.40.50.880:FF:000001">
    <property type="entry name" value="GMP synthase [glutamine-hydrolyzing]"/>
    <property type="match status" value="1"/>
</dbReference>
<dbReference type="Gene3D" id="3.30.300.10">
    <property type="match status" value="1"/>
</dbReference>
<dbReference type="Gene3D" id="3.40.50.880">
    <property type="match status" value="1"/>
</dbReference>
<dbReference type="Gene3D" id="3.40.50.620">
    <property type="entry name" value="HUPs"/>
    <property type="match status" value="1"/>
</dbReference>
<dbReference type="HAMAP" id="MF_00344">
    <property type="entry name" value="GMP_synthase"/>
    <property type="match status" value="1"/>
</dbReference>
<dbReference type="InterPro" id="IPR029062">
    <property type="entry name" value="Class_I_gatase-like"/>
</dbReference>
<dbReference type="InterPro" id="IPR017926">
    <property type="entry name" value="GATASE"/>
</dbReference>
<dbReference type="InterPro" id="IPR001674">
    <property type="entry name" value="GMP_synth_C"/>
</dbReference>
<dbReference type="InterPro" id="IPR004739">
    <property type="entry name" value="GMP_synth_GATase"/>
</dbReference>
<dbReference type="InterPro" id="IPR022955">
    <property type="entry name" value="GMP_synthase"/>
</dbReference>
<dbReference type="InterPro" id="IPR025777">
    <property type="entry name" value="GMPS_ATP_PPase_dom"/>
</dbReference>
<dbReference type="InterPro" id="IPR022310">
    <property type="entry name" value="NAD/GMP_synthase"/>
</dbReference>
<dbReference type="InterPro" id="IPR014729">
    <property type="entry name" value="Rossmann-like_a/b/a_fold"/>
</dbReference>
<dbReference type="NCBIfam" id="TIGR00884">
    <property type="entry name" value="guaA_Cterm"/>
    <property type="match status" value="1"/>
</dbReference>
<dbReference type="NCBIfam" id="TIGR00888">
    <property type="entry name" value="guaA_Nterm"/>
    <property type="match status" value="1"/>
</dbReference>
<dbReference type="NCBIfam" id="NF000848">
    <property type="entry name" value="PRK00074.1"/>
    <property type="match status" value="1"/>
</dbReference>
<dbReference type="PANTHER" id="PTHR11922:SF2">
    <property type="entry name" value="GMP SYNTHASE [GLUTAMINE-HYDROLYZING]"/>
    <property type="match status" value="1"/>
</dbReference>
<dbReference type="PANTHER" id="PTHR11922">
    <property type="entry name" value="GMP SYNTHASE-RELATED"/>
    <property type="match status" value="1"/>
</dbReference>
<dbReference type="Pfam" id="PF00117">
    <property type="entry name" value="GATase"/>
    <property type="match status" value="1"/>
</dbReference>
<dbReference type="Pfam" id="PF00958">
    <property type="entry name" value="GMP_synt_C"/>
    <property type="match status" value="1"/>
</dbReference>
<dbReference type="Pfam" id="PF02540">
    <property type="entry name" value="NAD_synthase"/>
    <property type="match status" value="1"/>
</dbReference>
<dbReference type="PRINTS" id="PR00097">
    <property type="entry name" value="ANTSNTHASEII"/>
</dbReference>
<dbReference type="PRINTS" id="PR00099">
    <property type="entry name" value="CPSGATASE"/>
</dbReference>
<dbReference type="PRINTS" id="PR00096">
    <property type="entry name" value="GATASE"/>
</dbReference>
<dbReference type="SUPFAM" id="SSF52402">
    <property type="entry name" value="Adenine nucleotide alpha hydrolases-like"/>
    <property type="match status" value="1"/>
</dbReference>
<dbReference type="SUPFAM" id="SSF52317">
    <property type="entry name" value="Class I glutamine amidotransferase-like"/>
    <property type="match status" value="1"/>
</dbReference>
<dbReference type="SUPFAM" id="SSF54810">
    <property type="entry name" value="GMP synthetase C-terminal dimerisation domain"/>
    <property type="match status" value="1"/>
</dbReference>
<dbReference type="PROSITE" id="PS51273">
    <property type="entry name" value="GATASE_TYPE_1"/>
    <property type="match status" value="1"/>
</dbReference>
<dbReference type="PROSITE" id="PS51553">
    <property type="entry name" value="GMPS_ATP_PPASE"/>
    <property type="match status" value="1"/>
</dbReference>
<keyword id="KW-0067">ATP-binding</keyword>
<keyword id="KW-0315">Glutamine amidotransferase</keyword>
<keyword id="KW-0332">GMP biosynthesis</keyword>
<keyword id="KW-0436">Ligase</keyword>
<keyword id="KW-0547">Nucleotide-binding</keyword>
<keyword id="KW-0658">Purine biosynthesis</keyword>
<sequence length="525" mass="58685">MNDLKKSPLLILDFGSQYTQLIARRVREMGVYCEIYPYNINHEQFKKLNPCGVILSGGPSTVTHDANPRAPQWLFESDLPLLGICYGMQTMAVQLGGQVHSSTLREFGYAELRLHGHSQLLSNIEDRTAMDGSALLDVWMSHGDKVTELPPGFKVICETRNAPIAGMADESRQMYGLQFHPEVTHTLQGLRILQRFVVDICKASTDWTPEHIIDEAINKIREQVGTEKVLLGLSGGVDSSVVAALLHRAIGEQLVCVFVDTGLLRLNEAEQVLSMFGRHMGIRIIAVNAEDKFLTALKGVTCPEEKRKIIGRTFIEVFDEEAQKLTDIKWLAQGTIYPDVIESAATSTNDAAVVIKSHHNVGGLPDTLNLKLLEPIRELFKDEVRHVGLELGLPHDMVYRHPFPGPGLGVRILAEVKKEYADILRKADAIFIEELHNAQLYHKISQAFAVFLPVKSVGVMGDGRRYDYVICLRAVETVDFMTAHWSQLPWDFLGKVSNRIINEVEGVSRVTYDISGKPPATIEWE</sequence>
<proteinExistence type="inferred from homology"/>